<protein>
    <recommendedName>
        <fullName evidence="1">Ribosomal protein uS12 methylthiotransferase RimO</fullName>
        <shortName evidence="1">uS12 MTTase</shortName>
        <shortName evidence="1">uS12 methylthiotransferase</shortName>
        <ecNumber evidence="1">2.8.4.4</ecNumber>
    </recommendedName>
    <alternativeName>
        <fullName evidence="1">Ribosomal protein uS12 (aspartate-C(3))-methylthiotransferase</fullName>
    </alternativeName>
    <alternativeName>
        <fullName evidence="1">Ribosome maturation factor RimO</fullName>
    </alternativeName>
</protein>
<organism>
    <name type="scientific">Helicobacter hepaticus (strain ATCC 51449 / 3B1)</name>
    <dbReference type="NCBI Taxonomy" id="235279"/>
    <lineage>
        <taxon>Bacteria</taxon>
        <taxon>Pseudomonadati</taxon>
        <taxon>Campylobacterota</taxon>
        <taxon>Epsilonproteobacteria</taxon>
        <taxon>Campylobacterales</taxon>
        <taxon>Helicobacteraceae</taxon>
        <taxon>Helicobacter</taxon>
    </lineage>
</organism>
<reference key="1">
    <citation type="journal article" date="2003" name="Proc. Natl. Acad. Sci. U.S.A.">
        <title>The complete genome sequence of the carcinogenic bacterium Helicobacter hepaticus.</title>
        <authorList>
            <person name="Suerbaum S."/>
            <person name="Josenhans C."/>
            <person name="Sterzenbach T."/>
            <person name="Drescher B."/>
            <person name="Brandt P."/>
            <person name="Bell M."/>
            <person name="Droege M."/>
            <person name="Fartmann B."/>
            <person name="Fischer H.-P."/>
            <person name="Ge Z."/>
            <person name="Hoerster A."/>
            <person name="Holland R."/>
            <person name="Klein K."/>
            <person name="Koenig J."/>
            <person name="Macko L."/>
            <person name="Mendz G.L."/>
            <person name="Nyakatura G."/>
            <person name="Schauer D.B."/>
            <person name="Shen Z."/>
            <person name="Weber J."/>
            <person name="Frosch M."/>
            <person name="Fox J.G."/>
        </authorList>
    </citation>
    <scope>NUCLEOTIDE SEQUENCE [LARGE SCALE GENOMIC DNA]</scope>
    <source>
        <strain>ATCC 51449 / 3B1</strain>
    </source>
</reference>
<name>RIMO_HELHP</name>
<keyword id="KW-0004">4Fe-4S</keyword>
<keyword id="KW-0963">Cytoplasm</keyword>
<keyword id="KW-0408">Iron</keyword>
<keyword id="KW-0411">Iron-sulfur</keyword>
<keyword id="KW-0479">Metal-binding</keyword>
<keyword id="KW-1185">Reference proteome</keyword>
<keyword id="KW-0949">S-adenosyl-L-methionine</keyword>
<keyword id="KW-0808">Transferase</keyword>
<sequence length="448" mass="50877">MRFRERQSLHLISLGCTKNLVDSEVMLGRLQSYTLTQELENADVIIINTCGFIESAKQESIQTIFHASSNRKRGALLVVSGCLAERYTKELKEEIPEIDIITGVSDYDKIDSMIAQRRSIESAKVFLADEHNERVIIGSSFHAYIKLSEGCNQACSFCAIPQFKGKLHSRTLQSTLKELTNLYNQGFRDFSFIAQDSSSYMRDLGQKDGLMQLIRAVDNLNLPISARILYLYPSSTSLQLIESIAQSKSFLPYFDMPIQHIADAMLKTMRRGADKATHLELLNAMRAVPHNFVRTSFIIGHPNEDEKAFLELHDFIESFAFDRINLFAYSPQEGTAADSMPNRPNTKITNQRINTLNKIIQSQYKAHNLALVGQEVDAILEGKSEVSEYFYKARLKLWGKDIDGEILINDSEIVDSNNQMLLLKEGYYRVQITQCKDNFLFGKALSHL</sequence>
<comment type="function">
    <text evidence="1">Catalyzes the methylthiolation of an aspartic acid residue of ribosomal protein uS12.</text>
</comment>
<comment type="catalytic activity">
    <reaction evidence="1">
        <text>L-aspartate(89)-[ribosomal protein uS12]-hydrogen + (sulfur carrier)-SH + AH2 + 2 S-adenosyl-L-methionine = 3-methylsulfanyl-L-aspartate(89)-[ribosomal protein uS12]-hydrogen + (sulfur carrier)-H + 5'-deoxyadenosine + L-methionine + A + S-adenosyl-L-homocysteine + 2 H(+)</text>
        <dbReference type="Rhea" id="RHEA:37087"/>
        <dbReference type="Rhea" id="RHEA-COMP:10460"/>
        <dbReference type="Rhea" id="RHEA-COMP:10461"/>
        <dbReference type="Rhea" id="RHEA-COMP:14737"/>
        <dbReference type="Rhea" id="RHEA-COMP:14739"/>
        <dbReference type="ChEBI" id="CHEBI:13193"/>
        <dbReference type="ChEBI" id="CHEBI:15378"/>
        <dbReference type="ChEBI" id="CHEBI:17319"/>
        <dbReference type="ChEBI" id="CHEBI:17499"/>
        <dbReference type="ChEBI" id="CHEBI:29917"/>
        <dbReference type="ChEBI" id="CHEBI:29961"/>
        <dbReference type="ChEBI" id="CHEBI:57844"/>
        <dbReference type="ChEBI" id="CHEBI:57856"/>
        <dbReference type="ChEBI" id="CHEBI:59789"/>
        <dbReference type="ChEBI" id="CHEBI:64428"/>
        <dbReference type="ChEBI" id="CHEBI:73599"/>
        <dbReference type="EC" id="2.8.4.4"/>
    </reaction>
</comment>
<comment type="cofactor">
    <cofactor evidence="1">
        <name>[4Fe-4S] cluster</name>
        <dbReference type="ChEBI" id="CHEBI:49883"/>
    </cofactor>
    <text evidence="1">Binds 2 [4Fe-4S] clusters. One cluster is coordinated with 3 cysteines and an exchangeable S-adenosyl-L-methionine.</text>
</comment>
<comment type="subcellular location">
    <subcellularLocation>
        <location evidence="1">Cytoplasm</location>
    </subcellularLocation>
</comment>
<comment type="similarity">
    <text evidence="1">Belongs to the methylthiotransferase family. RimO subfamily.</text>
</comment>
<feature type="chain" id="PRO_0000374855" description="Ribosomal protein uS12 methylthiotransferase RimO">
    <location>
        <begin position="1"/>
        <end position="448"/>
    </location>
</feature>
<feature type="domain" description="MTTase N-terminal" evidence="1">
    <location>
        <begin position="7"/>
        <end position="119"/>
    </location>
</feature>
<feature type="domain" description="Radical SAM core" evidence="2">
    <location>
        <begin position="137"/>
        <end position="366"/>
    </location>
</feature>
<feature type="binding site" evidence="1">
    <location>
        <position position="16"/>
    </location>
    <ligand>
        <name>[4Fe-4S] cluster</name>
        <dbReference type="ChEBI" id="CHEBI:49883"/>
        <label>1</label>
    </ligand>
</feature>
<feature type="binding site" evidence="1">
    <location>
        <position position="50"/>
    </location>
    <ligand>
        <name>[4Fe-4S] cluster</name>
        <dbReference type="ChEBI" id="CHEBI:49883"/>
        <label>1</label>
    </ligand>
</feature>
<feature type="binding site" evidence="1">
    <location>
        <position position="82"/>
    </location>
    <ligand>
        <name>[4Fe-4S] cluster</name>
        <dbReference type="ChEBI" id="CHEBI:49883"/>
        <label>1</label>
    </ligand>
</feature>
<feature type="binding site" evidence="1">
    <location>
        <position position="151"/>
    </location>
    <ligand>
        <name>[4Fe-4S] cluster</name>
        <dbReference type="ChEBI" id="CHEBI:49883"/>
        <label>2</label>
        <note>4Fe-4S-S-AdoMet</note>
    </ligand>
</feature>
<feature type="binding site" evidence="1">
    <location>
        <position position="155"/>
    </location>
    <ligand>
        <name>[4Fe-4S] cluster</name>
        <dbReference type="ChEBI" id="CHEBI:49883"/>
        <label>2</label>
        <note>4Fe-4S-S-AdoMet</note>
    </ligand>
</feature>
<feature type="binding site" evidence="1">
    <location>
        <position position="158"/>
    </location>
    <ligand>
        <name>[4Fe-4S] cluster</name>
        <dbReference type="ChEBI" id="CHEBI:49883"/>
        <label>2</label>
        <note>4Fe-4S-S-AdoMet</note>
    </ligand>
</feature>
<accession>Q7VGL0</accession>
<proteinExistence type="inferred from homology"/>
<evidence type="ECO:0000255" key="1">
    <source>
        <dbReference type="HAMAP-Rule" id="MF_01865"/>
    </source>
</evidence>
<evidence type="ECO:0000255" key="2">
    <source>
        <dbReference type="PROSITE-ProRule" id="PRU01266"/>
    </source>
</evidence>
<gene>
    <name evidence="1" type="primary">rimO</name>
    <name type="ordered locus">HH_1311</name>
</gene>
<dbReference type="EC" id="2.8.4.4" evidence="1"/>
<dbReference type="EMBL" id="AE017125">
    <property type="protein sequence ID" value="AAP77908.1"/>
    <property type="molecule type" value="Genomic_DNA"/>
</dbReference>
<dbReference type="RefSeq" id="WP_011116151.1">
    <property type="nucleotide sequence ID" value="NC_004917.1"/>
</dbReference>
<dbReference type="SMR" id="Q7VGL0"/>
<dbReference type="STRING" id="235279.HH_1311"/>
<dbReference type="KEGG" id="hhe:HH_1311"/>
<dbReference type="eggNOG" id="COG0621">
    <property type="taxonomic scope" value="Bacteria"/>
</dbReference>
<dbReference type="HOGENOM" id="CLU_018697_0_1_7"/>
<dbReference type="OrthoDB" id="9805215at2"/>
<dbReference type="Proteomes" id="UP000002495">
    <property type="component" value="Chromosome"/>
</dbReference>
<dbReference type="GO" id="GO:0005829">
    <property type="term" value="C:cytosol"/>
    <property type="evidence" value="ECO:0007669"/>
    <property type="project" value="TreeGrafter"/>
</dbReference>
<dbReference type="GO" id="GO:0051539">
    <property type="term" value="F:4 iron, 4 sulfur cluster binding"/>
    <property type="evidence" value="ECO:0007669"/>
    <property type="project" value="UniProtKB-UniRule"/>
</dbReference>
<dbReference type="GO" id="GO:0035599">
    <property type="term" value="F:aspartic acid methylthiotransferase activity"/>
    <property type="evidence" value="ECO:0007669"/>
    <property type="project" value="TreeGrafter"/>
</dbReference>
<dbReference type="GO" id="GO:0046872">
    <property type="term" value="F:metal ion binding"/>
    <property type="evidence" value="ECO:0007669"/>
    <property type="project" value="UniProtKB-KW"/>
</dbReference>
<dbReference type="GO" id="GO:0103039">
    <property type="term" value="F:protein methylthiotransferase activity"/>
    <property type="evidence" value="ECO:0007669"/>
    <property type="project" value="UniProtKB-EC"/>
</dbReference>
<dbReference type="GO" id="GO:0006400">
    <property type="term" value="P:tRNA modification"/>
    <property type="evidence" value="ECO:0007669"/>
    <property type="project" value="InterPro"/>
</dbReference>
<dbReference type="CDD" id="cd01335">
    <property type="entry name" value="Radical_SAM"/>
    <property type="match status" value="1"/>
</dbReference>
<dbReference type="Gene3D" id="3.40.50.12160">
    <property type="entry name" value="Methylthiotransferase, N-terminal domain"/>
    <property type="match status" value="1"/>
</dbReference>
<dbReference type="Gene3D" id="3.80.30.20">
    <property type="entry name" value="tm_1862 like domain"/>
    <property type="match status" value="1"/>
</dbReference>
<dbReference type="HAMAP" id="MF_01865">
    <property type="entry name" value="MTTase_RimO"/>
    <property type="match status" value="1"/>
</dbReference>
<dbReference type="InterPro" id="IPR006638">
    <property type="entry name" value="Elp3/MiaA/NifB-like_rSAM"/>
</dbReference>
<dbReference type="InterPro" id="IPR005839">
    <property type="entry name" value="Methylthiotransferase"/>
</dbReference>
<dbReference type="InterPro" id="IPR020612">
    <property type="entry name" value="Methylthiotransferase_CS"/>
</dbReference>
<dbReference type="InterPro" id="IPR013848">
    <property type="entry name" value="Methylthiotransferase_N"/>
</dbReference>
<dbReference type="InterPro" id="IPR038135">
    <property type="entry name" value="Methylthiotransferase_N_sf"/>
</dbReference>
<dbReference type="InterPro" id="IPR005840">
    <property type="entry name" value="Ribosomal_uS12_MeSTrfase_RimO"/>
</dbReference>
<dbReference type="InterPro" id="IPR007197">
    <property type="entry name" value="rSAM"/>
</dbReference>
<dbReference type="InterPro" id="IPR023404">
    <property type="entry name" value="rSAM_horseshoe"/>
</dbReference>
<dbReference type="NCBIfam" id="TIGR01125">
    <property type="entry name" value="30S ribosomal protein S12 methylthiotransferase RimO"/>
    <property type="match status" value="1"/>
</dbReference>
<dbReference type="NCBIfam" id="TIGR00089">
    <property type="entry name" value="MiaB/RimO family radical SAM methylthiotransferase"/>
    <property type="match status" value="1"/>
</dbReference>
<dbReference type="PANTHER" id="PTHR43837">
    <property type="entry name" value="RIBOSOMAL PROTEIN S12 METHYLTHIOTRANSFERASE RIMO"/>
    <property type="match status" value="1"/>
</dbReference>
<dbReference type="PANTHER" id="PTHR43837:SF1">
    <property type="entry name" value="RIBOSOMAL PROTEIN US12 METHYLTHIOTRANSFERASE RIMO"/>
    <property type="match status" value="1"/>
</dbReference>
<dbReference type="Pfam" id="PF04055">
    <property type="entry name" value="Radical_SAM"/>
    <property type="match status" value="1"/>
</dbReference>
<dbReference type="Pfam" id="PF00919">
    <property type="entry name" value="UPF0004"/>
    <property type="match status" value="1"/>
</dbReference>
<dbReference type="SFLD" id="SFLDG01082">
    <property type="entry name" value="B12-binding_domain_containing"/>
    <property type="match status" value="1"/>
</dbReference>
<dbReference type="SFLD" id="SFLDG01061">
    <property type="entry name" value="methylthiotransferase"/>
    <property type="match status" value="1"/>
</dbReference>
<dbReference type="SFLD" id="SFLDF00274">
    <property type="entry name" value="ribosomal_protein_S12_methylth"/>
    <property type="match status" value="1"/>
</dbReference>
<dbReference type="SMART" id="SM00729">
    <property type="entry name" value="Elp3"/>
    <property type="match status" value="1"/>
</dbReference>
<dbReference type="SUPFAM" id="SSF102114">
    <property type="entry name" value="Radical SAM enzymes"/>
    <property type="match status" value="1"/>
</dbReference>
<dbReference type="PROSITE" id="PS51449">
    <property type="entry name" value="MTTASE_N"/>
    <property type="match status" value="1"/>
</dbReference>
<dbReference type="PROSITE" id="PS01278">
    <property type="entry name" value="MTTASE_RADICAL"/>
    <property type="match status" value="1"/>
</dbReference>
<dbReference type="PROSITE" id="PS51918">
    <property type="entry name" value="RADICAL_SAM"/>
    <property type="match status" value="1"/>
</dbReference>